<evidence type="ECO:0000255" key="1">
    <source>
        <dbReference type="HAMAP-Rule" id="MF_00624"/>
    </source>
</evidence>
<gene>
    <name evidence="1" type="primary">glgC</name>
    <name type="ordered locus">CLL_A3413</name>
</gene>
<organism>
    <name type="scientific">Clostridium botulinum (strain Eklund 17B / Type B)</name>
    <dbReference type="NCBI Taxonomy" id="935198"/>
    <lineage>
        <taxon>Bacteria</taxon>
        <taxon>Bacillati</taxon>
        <taxon>Bacillota</taxon>
        <taxon>Clostridia</taxon>
        <taxon>Eubacteriales</taxon>
        <taxon>Clostridiaceae</taxon>
        <taxon>Clostridium</taxon>
    </lineage>
</organism>
<dbReference type="EC" id="2.7.7.27" evidence="1"/>
<dbReference type="EMBL" id="CP001056">
    <property type="protein sequence ID" value="ACD24397.1"/>
    <property type="molecule type" value="Genomic_DNA"/>
</dbReference>
<dbReference type="SMR" id="B2TR25"/>
<dbReference type="KEGG" id="cbk:CLL_A3413"/>
<dbReference type="PATRIC" id="fig|935198.13.peg.3373"/>
<dbReference type="HOGENOM" id="CLU_029499_14_0_9"/>
<dbReference type="UniPathway" id="UPA00164"/>
<dbReference type="Proteomes" id="UP000001195">
    <property type="component" value="Chromosome"/>
</dbReference>
<dbReference type="GO" id="GO:0005524">
    <property type="term" value="F:ATP binding"/>
    <property type="evidence" value="ECO:0007669"/>
    <property type="project" value="UniProtKB-KW"/>
</dbReference>
<dbReference type="GO" id="GO:0008878">
    <property type="term" value="F:glucose-1-phosphate adenylyltransferase activity"/>
    <property type="evidence" value="ECO:0007669"/>
    <property type="project" value="UniProtKB-UniRule"/>
</dbReference>
<dbReference type="GO" id="GO:0005978">
    <property type="term" value="P:glycogen biosynthetic process"/>
    <property type="evidence" value="ECO:0007669"/>
    <property type="project" value="UniProtKB-UniRule"/>
</dbReference>
<dbReference type="CDD" id="cd02508">
    <property type="entry name" value="ADP_Glucose_PP"/>
    <property type="match status" value="1"/>
</dbReference>
<dbReference type="CDD" id="cd04651">
    <property type="entry name" value="LbH_G1P_AT_C"/>
    <property type="match status" value="1"/>
</dbReference>
<dbReference type="Gene3D" id="2.160.10.10">
    <property type="entry name" value="Hexapeptide repeat proteins"/>
    <property type="match status" value="1"/>
</dbReference>
<dbReference type="Gene3D" id="3.90.550.10">
    <property type="entry name" value="Spore Coat Polysaccharide Biosynthesis Protein SpsA, Chain A"/>
    <property type="match status" value="1"/>
</dbReference>
<dbReference type="HAMAP" id="MF_00624">
    <property type="entry name" value="GlgC"/>
    <property type="match status" value="1"/>
</dbReference>
<dbReference type="InterPro" id="IPR011831">
    <property type="entry name" value="ADP-Glc_PPase"/>
</dbReference>
<dbReference type="InterPro" id="IPR005836">
    <property type="entry name" value="ADP_Glu_pyroP_CS"/>
</dbReference>
<dbReference type="InterPro" id="IPR023049">
    <property type="entry name" value="GlgC_bac"/>
</dbReference>
<dbReference type="InterPro" id="IPR056818">
    <property type="entry name" value="GlmU/GlgC-like_hexapep"/>
</dbReference>
<dbReference type="InterPro" id="IPR005835">
    <property type="entry name" value="NTP_transferase_dom"/>
</dbReference>
<dbReference type="InterPro" id="IPR029044">
    <property type="entry name" value="Nucleotide-diphossugar_trans"/>
</dbReference>
<dbReference type="InterPro" id="IPR011004">
    <property type="entry name" value="Trimer_LpxA-like_sf"/>
</dbReference>
<dbReference type="NCBIfam" id="TIGR02091">
    <property type="entry name" value="glgC"/>
    <property type="match status" value="1"/>
</dbReference>
<dbReference type="NCBIfam" id="NF003670">
    <property type="entry name" value="PRK05293.1"/>
    <property type="match status" value="1"/>
</dbReference>
<dbReference type="PANTHER" id="PTHR43523:SF2">
    <property type="entry name" value="GLUCOSE-1-PHOSPHATE ADENYLYLTRANSFERASE"/>
    <property type="match status" value="1"/>
</dbReference>
<dbReference type="PANTHER" id="PTHR43523">
    <property type="entry name" value="GLUCOSE-1-PHOSPHATE ADENYLYLTRANSFERASE-RELATED"/>
    <property type="match status" value="1"/>
</dbReference>
<dbReference type="Pfam" id="PF24894">
    <property type="entry name" value="Hexapep_GlmU"/>
    <property type="match status" value="1"/>
</dbReference>
<dbReference type="Pfam" id="PF00483">
    <property type="entry name" value="NTP_transferase"/>
    <property type="match status" value="1"/>
</dbReference>
<dbReference type="SUPFAM" id="SSF53448">
    <property type="entry name" value="Nucleotide-diphospho-sugar transferases"/>
    <property type="match status" value="1"/>
</dbReference>
<dbReference type="SUPFAM" id="SSF51161">
    <property type="entry name" value="Trimeric LpxA-like enzymes"/>
    <property type="match status" value="1"/>
</dbReference>
<dbReference type="PROSITE" id="PS00808">
    <property type="entry name" value="ADP_GLC_PYROPHOSPH_1"/>
    <property type="match status" value="1"/>
</dbReference>
<dbReference type="PROSITE" id="PS00809">
    <property type="entry name" value="ADP_GLC_PYROPHOSPH_2"/>
    <property type="match status" value="1"/>
</dbReference>
<dbReference type="PROSITE" id="PS00810">
    <property type="entry name" value="ADP_GLC_PYROPHOSPH_3"/>
    <property type="match status" value="1"/>
</dbReference>
<name>GLGC_CLOBB</name>
<reference key="1">
    <citation type="submission" date="2008-04" db="EMBL/GenBank/DDBJ databases">
        <title>Complete sequence of Clostridium botulinum strain Eklund.</title>
        <authorList>
            <person name="Brinkac L.M."/>
            <person name="Brown J.L."/>
            <person name="Bruce D."/>
            <person name="Detter C."/>
            <person name="Munk C."/>
            <person name="Smith L.A."/>
            <person name="Smith T.J."/>
            <person name="Sutton G."/>
            <person name="Brettin T.S."/>
        </authorList>
    </citation>
    <scope>NUCLEOTIDE SEQUENCE [LARGE SCALE GENOMIC DNA]</scope>
    <source>
        <strain>Eklund 17B / Type B</strain>
    </source>
</reference>
<keyword id="KW-0067">ATP-binding</keyword>
<keyword id="KW-0119">Carbohydrate metabolism</keyword>
<keyword id="KW-0320">Glycogen biosynthesis</keyword>
<keyword id="KW-0321">Glycogen metabolism</keyword>
<keyword id="KW-0547">Nucleotide-binding</keyword>
<keyword id="KW-0548">Nucleotidyltransferase</keyword>
<keyword id="KW-0808">Transferase</keyword>
<protein>
    <recommendedName>
        <fullName evidence="1">Glucose-1-phosphate adenylyltransferase</fullName>
        <ecNumber evidence="1">2.7.7.27</ecNumber>
    </recommendedName>
    <alternativeName>
        <fullName evidence="1">ADP-glucose pyrophosphorylase</fullName>
        <shortName evidence="1">ADPGlc PPase</shortName>
    </alternativeName>
    <alternativeName>
        <fullName evidence="1">ADP-glucose synthase</fullName>
    </alternativeName>
</protein>
<comment type="function">
    <text evidence="1">Involved in the biosynthesis of ADP-glucose, a building block required for the elongation reactions to produce glycogen. Catalyzes the reaction between ATP and alpha-D-glucose 1-phosphate (G1P) to produce pyrophosphate and ADP-Glc.</text>
</comment>
<comment type="catalytic activity">
    <reaction evidence="1">
        <text>alpha-D-glucose 1-phosphate + ATP + H(+) = ADP-alpha-D-glucose + diphosphate</text>
        <dbReference type="Rhea" id="RHEA:12120"/>
        <dbReference type="ChEBI" id="CHEBI:15378"/>
        <dbReference type="ChEBI" id="CHEBI:30616"/>
        <dbReference type="ChEBI" id="CHEBI:33019"/>
        <dbReference type="ChEBI" id="CHEBI:57498"/>
        <dbReference type="ChEBI" id="CHEBI:58601"/>
        <dbReference type="EC" id="2.7.7.27"/>
    </reaction>
</comment>
<comment type="pathway">
    <text evidence="1">Glycan biosynthesis; glycogen biosynthesis.</text>
</comment>
<comment type="subunit">
    <text evidence="1">Homotetramer.</text>
</comment>
<comment type="similarity">
    <text evidence="1">Belongs to the bacterial/plant glucose-1-phosphate adenylyltransferase family.</text>
</comment>
<proteinExistence type="inferred from homology"/>
<sequence>MGNTEIVAMILAGGQGSRLGVLTKKLAKPAVPFGGKYRIIDFPLSNCANSGIYTVGVLTQYKPLELNAHIGIGLPWDLDRKDGGVSILPPYQEEKGGNWYKGTANAIYQNIEFVDRYDPEYVLILSGDHIYKMNYTKMLEFHKEKNADATIGVIEVPVNEASRFGIMNTRDDMSIYEFEEKPKIPKSNLASMGIYIFNWKTLKKYLRNDEANKGSSNDFGKDIIPSMLNDGGKMVAYPFEGYWKDVGTIESLWQANMDLLKSDNKLNLHDQDWRIYSTNPVRPAQYIGENAKVTNSLIVEGCTVNGTVQNSVLFQGVQVGKNTIIKDSVIMTNAKIGDNVIIEKAIIGNDAVIRKDCVIGTGDEIEIVAAKEEVKMGSIMKNNKAV</sequence>
<feature type="chain" id="PRO_1000130471" description="Glucose-1-phosphate adenylyltransferase">
    <location>
        <begin position="1"/>
        <end position="386"/>
    </location>
</feature>
<feature type="binding site" evidence="1">
    <location>
        <position position="100"/>
    </location>
    <ligand>
        <name>alpha-D-glucose 1-phosphate</name>
        <dbReference type="ChEBI" id="CHEBI:58601"/>
    </ligand>
</feature>
<feature type="binding site" evidence="1">
    <location>
        <position position="165"/>
    </location>
    <ligand>
        <name>alpha-D-glucose 1-phosphate</name>
        <dbReference type="ChEBI" id="CHEBI:58601"/>
    </ligand>
</feature>
<feature type="binding site" evidence="1">
    <location>
        <begin position="180"/>
        <end position="181"/>
    </location>
    <ligand>
        <name>alpha-D-glucose 1-phosphate</name>
        <dbReference type="ChEBI" id="CHEBI:58601"/>
    </ligand>
</feature>
<feature type="binding site" evidence="1">
    <location>
        <position position="191"/>
    </location>
    <ligand>
        <name>alpha-D-glucose 1-phosphate</name>
        <dbReference type="ChEBI" id="CHEBI:58601"/>
    </ligand>
</feature>
<accession>B2TR25</accession>